<comment type="function">
    <text>Serves a protective function during the early stages of spore wall formation, and contributes to spore wall maturation.</text>
</comment>
<comment type="induction">
    <text evidence="3">Induced at very late stage of sporulation.</text>
</comment>
<comment type="miscellaneous">
    <text>The program of events of meiosis and spore formation reflects the sequential expression of at least four temporally distinct classes of sporulation-specific genes, SPS100 and SPS101 genes define a distinct class of very late sporulation genes.</text>
</comment>
<comment type="similarity">
    <text evidence="4">To yeast YGP1.</text>
</comment>
<evidence type="ECO:0000255" key="1"/>
<evidence type="ECO:0000255" key="2">
    <source>
        <dbReference type="PROSITE-ProRule" id="PRU01068"/>
    </source>
</evidence>
<evidence type="ECO:0000269" key="3">
    <source>
    </source>
</evidence>
<evidence type="ECO:0000305" key="4"/>
<gene>
    <name type="primary">SPS100</name>
    <name type="ordered locus">YHR139C</name>
</gene>
<reference key="1">
    <citation type="journal article" date="1988" name="Mol. Cell. Biol.">
        <title>The SPS100 gene of Saccharomyces cerevisiae is activated late in the sporulation process and contributes to spore wall maturation.</title>
        <authorList>
            <person name="Law D.T.S."/>
            <person name="Segall J."/>
        </authorList>
    </citation>
    <scope>NUCLEOTIDE SEQUENCE [GENOMIC DNA]</scope>
    <scope>INDUCTION</scope>
</reference>
<reference key="2">
    <citation type="journal article" date="1994" name="Science">
        <title>Complete nucleotide sequence of Saccharomyces cerevisiae chromosome VIII.</title>
        <authorList>
            <person name="Johnston M."/>
            <person name="Andrews S."/>
            <person name="Brinkman R."/>
            <person name="Cooper J."/>
            <person name="Ding H."/>
            <person name="Dover J."/>
            <person name="Du Z."/>
            <person name="Favello A."/>
            <person name="Fulton L."/>
            <person name="Gattung S."/>
            <person name="Geisel C."/>
            <person name="Kirsten J."/>
            <person name="Kucaba T."/>
            <person name="Hillier L.W."/>
            <person name="Jier M."/>
            <person name="Johnston L."/>
            <person name="Langston Y."/>
            <person name="Latreille P."/>
            <person name="Louis E.J."/>
            <person name="Macri C."/>
            <person name="Mardis E."/>
            <person name="Menezes S."/>
            <person name="Mouser L."/>
            <person name="Nhan M."/>
            <person name="Rifkin L."/>
            <person name="Riles L."/>
            <person name="St Peter H."/>
            <person name="Trevaskis E."/>
            <person name="Vaughan K."/>
            <person name="Vignati D."/>
            <person name="Wilcox L."/>
            <person name="Wohldman P."/>
            <person name="Waterston R."/>
            <person name="Wilson R."/>
            <person name="Vaudin M."/>
        </authorList>
    </citation>
    <scope>NUCLEOTIDE SEQUENCE [LARGE SCALE GENOMIC DNA]</scope>
    <source>
        <strain>ATCC 204508 / S288c</strain>
    </source>
</reference>
<reference key="3">
    <citation type="journal article" date="2014" name="G3 (Bethesda)">
        <title>The reference genome sequence of Saccharomyces cerevisiae: Then and now.</title>
        <authorList>
            <person name="Engel S.R."/>
            <person name="Dietrich F.S."/>
            <person name="Fisk D.G."/>
            <person name="Binkley G."/>
            <person name="Balakrishnan R."/>
            <person name="Costanzo M.C."/>
            <person name="Dwight S.S."/>
            <person name="Hitz B.C."/>
            <person name="Karra K."/>
            <person name="Nash R.S."/>
            <person name="Weng S."/>
            <person name="Wong E.D."/>
            <person name="Lloyd P."/>
            <person name="Skrzypek M.S."/>
            <person name="Miyasato S.R."/>
            <person name="Simison M."/>
            <person name="Cherry J.M."/>
        </authorList>
    </citation>
    <scope>GENOME REANNOTATION</scope>
    <source>
        <strain>ATCC 204508 / S288c</strain>
    </source>
</reference>
<reference key="4">
    <citation type="journal article" date="1998" name="Mol. Gen. Genet.">
        <title>Characterisation of Saccharomyces cerevisiae ARO8 and ARO9 genes encoding aromatic aminotransferases I and II reveals a new aminotransferase subfamily.</title>
        <authorList>
            <person name="Iraqui I."/>
            <person name="Vissers S."/>
            <person name="Cartiaux M."/>
            <person name="Urrestarazu A."/>
        </authorList>
    </citation>
    <scope>NUCLEOTIDE SEQUENCE [GENOMIC DNA] OF 257-326</scope>
    <source>
        <strain>Sigma 1278B</strain>
    </source>
</reference>
<name>SS100_YEAST</name>
<organism>
    <name type="scientific">Saccharomyces cerevisiae (strain ATCC 204508 / S288c)</name>
    <name type="common">Baker's yeast</name>
    <dbReference type="NCBI Taxonomy" id="559292"/>
    <lineage>
        <taxon>Eukaryota</taxon>
        <taxon>Fungi</taxon>
        <taxon>Dikarya</taxon>
        <taxon>Ascomycota</taxon>
        <taxon>Saccharomycotina</taxon>
        <taxon>Saccharomycetes</taxon>
        <taxon>Saccharomycetales</taxon>
        <taxon>Saccharomycetaceae</taxon>
        <taxon>Saccharomyces</taxon>
    </lineage>
</organism>
<feature type="signal peptide" evidence="1">
    <location>
        <begin position="1"/>
        <end position="18"/>
    </location>
</feature>
<feature type="chain" id="PRO_0000022419" description="Sporulation-specific wall maturation protein">
    <location>
        <begin position="19"/>
        <end position="326"/>
    </location>
</feature>
<feature type="domain" description="Asparaginase/glutaminase" evidence="2">
    <location>
        <begin position="19"/>
        <end position="324"/>
    </location>
</feature>
<feature type="glycosylation site" description="N-linked (GlcNAc...) asparagine" evidence="1">
    <location>
        <position position="26"/>
    </location>
</feature>
<feature type="glycosylation site" description="N-linked (GlcNAc...) asparagine" evidence="1">
    <location>
        <position position="50"/>
    </location>
</feature>
<feature type="glycosylation site" description="N-linked (GlcNAc...) asparagine" evidence="1">
    <location>
        <position position="58"/>
    </location>
</feature>
<feature type="glycosylation site" description="N-linked (GlcNAc...) asparagine" evidence="1">
    <location>
        <position position="64"/>
    </location>
</feature>
<feature type="glycosylation site" description="N-linked (GlcNAc...) asparagine" evidence="1">
    <location>
        <position position="76"/>
    </location>
</feature>
<feature type="glycosylation site" description="N-linked (GlcNAc...) asparagine" evidence="1">
    <location>
        <position position="108"/>
    </location>
</feature>
<feature type="glycosylation site" description="N-linked (GlcNAc...) asparagine" evidence="1">
    <location>
        <position position="181"/>
    </location>
</feature>
<feature type="glycosylation site" description="N-linked (GlcNAc...) asparagine" evidence="1">
    <location>
        <position position="190"/>
    </location>
</feature>
<feature type="glycosylation site" description="N-linked (GlcNAc...) asparagine" evidence="1">
    <location>
        <position position="199"/>
    </location>
</feature>
<feature type="glycosylation site" description="N-linked (GlcNAc...) asparagine" evidence="1">
    <location>
        <position position="205"/>
    </location>
</feature>
<feature type="glycosylation site" description="N-linked (GlcNAc...) asparagine" evidence="1">
    <location>
        <position position="248"/>
    </location>
</feature>
<feature type="glycosylation site" description="N-linked (GlcNAc...) asparagine" evidence="1">
    <location>
        <position position="281"/>
    </location>
</feature>
<proteinExistence type="evidence at transcript level"/>
<sequence length="326" mass="34226">MKFTSVLAFFLATLTASATPLYKRQNVTSGGGTVPVIITGGPAVSGSQSNVTTTTLFNSTSTLNITQLYQIATQVNQTLQSESSSGIIIVTNWRSIETLSFFCSIVFNTSKTIVITENFLWGVPILSSSDAEGRGTLVAGRDKVVYSGVFPPYTVPVGVLSGQKNVQWFFDACEPTLIASNSTIRTQYSNFTSAQISSNASSGTNTSSSSSSPLVPIIYEEGYSQSLIQSLSSSIQGLVVVSSGTSHNSTVASWTSVDFPVVYASDGSSGHDGSGIGFISNTSIPQGAISAGYLSPIQAQTLLSIAIHNQVTSSSELQQIFPVSQQ</sequence>
<keyword id="KW-0325">Glycoprotein</keyword>
<keyword id="KW-1185">Reference proteome</keyword>
<keyword id="KW-0732">Signal</keyword>
<keyword id="KW-0749">Sporulation</keyword>
<dbReference type="EMBL" id="M20366">
    <property type="protein sequence ID" value="AAA35082.1"/>
    <property type="molecule type" value="Genomic_DNA"/>
</dbReference>
<dbReference type="EMBL" id="U10398">
    <property type="protein sequence ID" value="AAB68419.1"/>
    <property type="molecule type" value="Genomic_DNA"/>
</dbReference>
<dbReference type="EMBL" id="Y13625">
    <property type="protein sequence ID" value="CAA73952.1"/>
    <property type="molecule type" value="Genomic_DNA"/>
</dbReference>
<dbReference type="EMBL" id="BK006934">
    <property type="protein sequence ID" value="DAA06832.1"/>
    <property type="molecule type" value="Genomic_DNA"/>
</dbReference>
<dbReference type="PIR" id="A28129">
    <property type="entry name" value="A28129"/>
</dbReference>
<dbReference type="RefSeq" id="NP_012007.1">
    <property type="nucleotide sequence ID" value="NM_001179269.1"/>
</dbReference>
<dbReference type="SMR" id="P13130"/>
<dbReference type="BioGRID" id="36572">
    <property type="interactions" value="27"/>
</dbReference>
<dbReference type="FunCoup" id="P13130">
    <property type="interactions" value="67"/>
</dbReference>
<dbReference type="STRING" id="4932.YHR139C"/>
<dbReference type="GlyCosmos" id="P13130">
    <property type="glycosylation" value="12 sites, No reported glycans"/>
</dbReference>
<dbReference type="GlyGen" id="P13130">
    <property type="glycosylation" value="12 sites"/>
</dbReference>
<dbReference type="PaxDb" id="4932-YHR139C"/>
<dbReference type="PeptideAtlas" id="P13130"/>
<dbReference type="EnsemblFungi" id="YHR139C_mRNA">
    <property type="protein sequence ID" value="YHR139C"/>
    <property type="gene ID" value="YHR139C"/>
</dbReference>
<dbReference type="GeneID" id="856541"/>
<dbReference type="KEGG" id="sce:YHR139C"/>
<dbReference type="AGR" id="SGD:S000001181"/>
<dbReference type="SGD" id="S000001181">
    <property type="gene designation" value="SPS100"/>
</dbReference>
<dbReference type="VEuPathDB" id="FungiDB:YHR139C"/>
<dbReference type="eggNOG" id="KOG0503">
    <property type="taxonomic scope" value="Eukaryota"/>
</dbReference>
<dbReference type="GeneTree" id="ENSGT00940000176754"/>
<dbReference type="HOGENOM" id="CLU_046466_0_0_1"/>
<dbReference type="InParanoid" id="P13130"/>
<dbReference type="OMA" id="FESMAFF"/>
<dbReference type="OrthoDB" id="4070114at2759"/>
<dbReference type="BioCyc" id="YEAST:G3O-31175-MONOMER"/>
<dbReference type="BioGRID-ORCS" id="856541">
    <property type="hits" value="3 hits in 10 CRISPR screens"/>
</dbReference>
<dbReference type="PRO" id="PR:P13130"/>
<dbReference type="Proteomes" id="UP000002311">
    <property type="component" value="Chromosome VIII"/>
</dbReference>
<dbReference type="RNAct" id="P13130">
    <property type="molecule type" value="protein"/>
</dbReference>
<dbReference type="GO" id="GO:0030476">
    <property type="term" value="P:ascospore wall assembly"/>
    <property type="evidence" value="ECO:0000315"/>
    <property type="project" value="SGD"/>
</dbReference>
<dbReference type="InterPro" id="IPR036152">
    <property type="entry name" value="Asp/glu_Ase-like_sf"/>
</dbReference>
<dbReference type="InterPro" id="IPR006034">
    <property type="entry name" value="Asparaginase/glutaminase-like"/>
</dbReference>
<dbReference type="PIRSF" id="PIRSF001220">
    <property type="entry name" value="L-ASNase_gatD"/>
    <property type="match status" value="1"/>
</dbReference>
<dbReference type="PIRSF" id="PIRSF500176">
    <property type="entry name" value="L_ASNase"/>
    <property type="match status" value="1"/>
</dbReference>
<dbReference type="SUPFAM" id="SSF53774">
    <property type="entry name" value="Glutaminase/Asparaginase"/>
    <property type="match status" value="1"/>
</dbReference>
<dbReference type="PROSITE" id="PS51732">
    <property type="entry name" value="ASN_GLN_ASE_3"/>
    <property type="match status" value="1"/>
</dbReference>
<protein>
    <recommendedName>
        <fullName>Sporulation-specific wall maturation protein</fullName>
    </recommendedName>
</protein>
<accession>P13130</accession>
<accession>D3DL88</accession>